<name>RL2_XANE5</name>
<sequence>MPLMKFKPTSPGRRSAVRVVTPDLHKGAPHAALLDSQSKSGGRNHHGRITVRHVGGGHKQHYRIIDFKRNKEGIPARVERIEYDPNRTAHIALLCYVDGERRYIIAPKGLKAGDQVIAGANAPIKTGNTLPLRNIPVGTTVHGIELKPGKGAQIARAAGAAVQLVAREGIYATLRLRSGEMRKVPVECRATIGEVGNDEHNLEKLGKAGAKRWRGVRPTVRGAAMNPVDHPHGGGEAKAGQGNPHPVTPWGVPTKGYKTRKNKRTQQFIVRDRRG</sequence>
<keyword id="KW-0687">Ribonucleoprotein</keyword>
<keyword id="KW-0689">Ribosomal protein</keyword>
<keyword id="KW-0694">RNA-binding</keyword>
<keyword id="KW-0699">rRNA-binding</keyword>
<reference key="1">
    <citation type="journal article" date="2005" name="J. Bacteriol.">
        <title>Insights into genome plasticity and pathogenicity of the plant pathogenic Bacterium Xanthomonas campestris pv. vesicatoria revealed by the complete genome sequence.</title>
        <authorList>
            <person name="Thieme F."/>
            <person name="Koebnik R."/>
            <person name="Bekel T."/>
            <person name="Berger C."/>
            <person name="Boch J."/>
            <person name="Buettner D."/>
            <person name="Caldana C."/>
            <person name="Gaigalat L."/>
            <person name="Goesmann A."/>
            <person name="Kay S."/>
            <person name="Kirchner O."/>
            <person name="Lanz C."/>
            <person name="Linke B."/>
            <person name="McHardy A.C."/>
            <person name="Meyer F."/>
            <person name="Mittenhuber G."/>
            <person name="Nies D.H."/>
            <person name="Niesbach-Kloesgen U."/>
            <person name="Patschkowski T."/>
            <person name="Rueckert C."/>
            <person name="Rupp O."/>
            <person name="Schneiker S."/>
            <person name="Schuster S.C."/>
            <person name="Vorhoelter F.J."/>
            <person name="Weber E."/>
            <person name="Puehler A."/>
            <person name="Bonas U."/>
            <person name="Bartels D."/>
            <person name="Kaiser O."/>
        </authorList>
    </citation>
    <scope>NUCLEOTIDE SEQUENCE [LARGE SCALE GENOMIC DNA]</scope>
    <source>
        <strain>85-10</strain>
    </source>
</reference>
<protein>
    <recommendedName>
        <fullName evidence="1">Large ribosomal subunit protein uL2</fullName>
    </recommendedName>
    <alternativeName>
        <fullName evidence="3">50S ribosomal protein L2</fullName>
    </alternativeName>
</protein>
<organism>
    <name type="scientific">Xanthomonas euvesicatoria pv. vesicatoria (strain 85-10)</name>
    <name type="common">Xanthomonas campestris pv. vesicatoria</name>
    <dbReference type="NCBI Taxonomy" id="316273"/>
    <lineage>
        <taxon>Bacteria</taxon>
        <taxon>Pseudomonadati</taxon>
        <taxon>Pseudomonadota</taxon>
        <taxon>Gammaproteobacteria</taxon>
        <taxon>Lysobacterales</taxon>
        <taxon>Lysobacteraceae</taxon>
        <taxon>Xanthomonas</taxon>
    </lineage>
</organism>
<dbReference type="EMBL" id="AM039952">
    <property type="protein sequence ID" value="CAJ22633.1"/>
    <property type="molecule type" value="Genomic_DNA"/>
</dbReference>
<dbReference type="RefSeq" id="WP_003486715.1">
    <property type="nucleotide sequence ID" value="NZ_CP017190.1"/>
</dbReference>
<dbReference type="SMR" id="Q3BWY0"/>
<dbReference type="STRING" id="456327.BJD11_17725"/>
<dbReference type="GeneID" id="97509339"/>
<dbReference type="KEGG" id="xcv:XCV1002"/>
<dbReference type="eggNOG" id="COG0090">
    <property type="taxonomic scope" value="Bacteria"/>
</dbReference>
<dbReference type="HOGENOM" id="CLU_036235_2_1_6"/>
<dbReference type="Proteomes" id="UP000007069">
    <property type="component" value="Chromosome"/>
</dbReference>
<dbReference type="GO" id="GO:0015934">
    <property type="term" value="C:large ribosomal subunit"/>
    <property type="evidence" value="ECO:0007669"/>
    <property type="project" value="InterPro"/>
</dbReference>
<dbReference type="GO" id="GO:0019843">
    <property type="term" value="F:rRNA binding"/>
    <property type="evidence" value="ECO:0007669"/>
    <property type="project" value="UniProtKB-UniRule"/>
</dbReference>
<dbReference type="GO" id="GO:0003735">
    <property type="term" value="F:structural constituent of ribosome"/>
    <property type="evidence" value="ECO:0007669"/>
    <property type="project" value="InterPro"/>
</dbReference>
<dbReference type="GO" id="GO:0016740">
    <property type="term" value="F:transferase activity"/>
    <property type="evidence" value="ECO:0007669"/>
    <property type="project" value="InterPro"/>
</dbReference>
<dbReference type="GO" id="GO:0002181">
    <property type="term" value="P:cytoplasmic translation"/>
    <property type="evidence" value="ECO:0007669"/>
    <property type="project" value="TreeGrafter"/>
</dbReference>
<dbReference type="FunFam" id="2.30.30.30:FF:000001">
    <property type="entry name" value="50S ribosomal protein L2"/>
    <property type="match status" value="1"/>
</dbReference>
<dbReference type="FunFam" id="2.40.50.140:FF:000003">
    <property type="entry name" value="50S ribosomal protein L2"/>
    <property type="match status" value="1"/>
</dbReference>
<dbReference type="FunFam" id="4.10.950.10:FF:000001">
    <property type="entry name" value="50S ribosomal protein L2"/>
    <property type="match status" value="1"/>
</dbReference>
<dbReference type="Gene3D" id="2.30.30.30">
    <property type="match status" value="1"/>
</dbReference>
<dbReference type="Gene3D" id="2.40.50.140">
    <property type="entry name" value="Nucleic acid-binding proteins"/>
    <property type="match status" value="1"/>
</dbReference>
<dbReference type="Gene3D" id="4.10.950.10">
    <property type="entry name" value="Ribosomal protein L2, domain 3"/>
    <property type="match status" value="1"/>
</dbReference>
<dbReference type="HAMAP" id="MF_01320_B">
    <property type="entry name" value="Ribosomal_uL2_B"/>
    <property type="match status" value="1"/>
</dbReference>
<dbReference type="InterPro" id="IPR012340">
    <property type="entry name" value="NA-bd_OB-fold"/>
</dbReference>
<dbReference type="InterPro" id="IPR014722">
    <property type="entry name" value="Rib_uL2_dom2"/>
</dbReference>
<dbReference type="InterPro" id="IPR002171">
    <property type="entry name" value="Ribosomal_uL2"/>
</dbReference>
<dbReference type="InterPro" id="IPR005880">
    <property type="entry name" value="Ribosomal_uL2_bac/org-type"/>
</dbReference>
<dbReference type="InterPro" id="IPR022669">
    <property type="entry name" value="Ribosomal_uL2_C"/>
</dbReference>
<dbReference type="InterPro" id="IPR022671">
    <property type="entry name" value="Ribosomal_uL2_CS"/>
</dbReference>
<dbReference type="InterPro" id="IPR014726">
    <property type="entry name" value="Ribosomal_uL2_dom3"/>
</dbReference>
<dbReference type="InterPro" id="IPR022666">
    <property type="entry name" value="Ribosomal_uL2_RNA-bd_dom"/>
</dbReference>
<dbReference type="InterPro" id="IPR008991">
    <property type="entry name" value="Translation_prot_SH3-like_sf"/>
</dbReference>
<dbReference type="NCBIfam" id="TIGR01171">
    <property type="entry name" value="rplB_bact"/>
    <property type="match status" value="1"/>
</dbReference>
<dbReference type="PANTHER" id="PTHR13691:SF5">
    <property type="entry name" value="LARGE RIBOSOMAL SUBUNIT PROTEIN UL2M"/>
    <property type="match status" value="1"/>
</dbReference>
<dbReference type="PANTHER" id="PTHR13691">
    <property type="entry name" value="RIBOSOMAL PROTEIN L2"/>
    <property type="match status" value="1"/>
</dbReference>
<dbReference type="Pfam" id="PF00181">
    <property type="entry name" value="Ribosomal_L2"/>
    <property type="match status" value="1"/>
</dbReference>
<dbReference type="Pfam" id="PF03947">
    <property type="entry name" value="Ribosomal_L2_C"/>
    <property type="match status" value="1"/>
</dbReference>
<dbReference type="PIRSF" id="PIRSF002158">
    <property type="entry name" value="Ribosomal_L2"/>
    <property type="match status" value="1"/>
</dbReference>
<dbReference type="SMART" id="SM01383">
    <property type="entry name" value="Ribosomal_L2"/>
    <property type="match status" value="1"/>
</dbReference>
<dbReference type="SMART" id="SM01382">
    <property type="entry name" value="Ribosomal_L2_C"/>
    <property type="match status" value="1"/>
</dbReference>
<dbReference type="SUPFAM" id="SSF50249">
    <property type="entry name" value="Nucleic acid-binding proteins"/>
    <property type="match status" value="1"/>
</dbReference>
<dbReference type="SUPFAM" id="SSF50104">
    <property type="entry name" value="Translation proteins SH3-like domain"/>
    <property type="match status" value="1"/>
</dbReference>
<dbReference type="PROSITE" id="PS00467">
    <property type="entry name" value="RIBOSOMAL_L2"/>
    <property type="match status" value="1"/>
</dbReference>
<gene>
    <name evidence="1" type="primary">rplB</name>
    <name type="ordered locus">XCV1002</name>
</gene>
<accession>Q3BWY0</accession>
<comment type="function">
    <text evidence="1">One of the primary rRNA binding proteins. Required for association of the 30S and 50S subunits to form the 70S ribosome, for tRNA binding and peptide bond formation. It has been suggested to have peptidyltransferase activity; this is somewhat controversial. Makes several contacts with the 16S rRNA in the 70S ribosome.</text>
</comment>
<comment type="subunit">
    <text evidence="1">Part of the 50S ribosomal subunit. Forms a bridge to the 30S subunit in the 70S ribosome.</text>
</comment>
<comment type="similarity">
    <text evidence="1">Belongs to the universal ribosomal protein uL2 family.</text>
</comment>
<evidence type="ECO:0000255" key="1">
    <source>
        <dbReference type="HAMAP-Rule" id="MF_01320"/>
    </source>
</evidence>
<evidence type="ECO:0000256" key="2">
    <source>
        <dbReference type="SAM" id="MobiDB-lite"/>
    </source>
</evidence>
<evidence type="ECO:0000305" key="3"/>
<feature type="chain" id="PRO_0000237268" description="Large ribosomal subunit protein uL2">
    <location>
        <begin position="1"/>
        <end position="275"/>
    </location>
</feature>
<feature type="region of interest" description="Disordered" evidence="2">
    <location>
        <begin position="224"/>
        <end position="275"/>
    </location>
</feature>
<proteinExistence type="inferred from homology"/>